<proteinExistence type="inferred from homology"/>
<protein>
    <recommendedName>
        <fullName evidence="4">Brevinin-1CG4</fullName>
    </recommendedName>
</protein>
<name>BR14_AMOCU</name>
<accession>E1AWD3</accession>
<reference evidence="6" key="1">
    <citation type="journal article" date="2012" name="Peptides">
        <title>Characterization of diverse antimicrobial peptides in skin secretions of Chungan torrent frog Amolops chunganensis.</title>
        <authorList>
            <person name="Yang X."/>
            <person name="Xia J."/>
            <person name="Yu Z."/>
            <person name="Hu Y."/>
            <person name="Li F."/>
            <person name="Meng H."/>
            <person name="Yang S."/>
            <person name="Liu J."/>
            <person name="Wang H."/>
        </authorList>
    </citation>
    <scope>NUCLEOTIDE SEQUENCE [MRNA]</scope>
    <scope>FUNCTION</scope>
    <scope>SYNTHESIS</scope>
</reference>
<comment type="function">
    <text evidence="3">Antimicrobial peptide active against a variety of Gram-positive and some Gram-negative bacterial strains. Has antifungal activity against C.albicans ATCC 10231 and a slime mold isolate. Has hemolytic activity against human erythrocytes.</text>
</comment>
<comment type="subcellular location">
    <subcellularLocation>
        <location evidence="5">Secreted</location>
    </subcellularLocation>
</comment>
<comment type="tissue specificity">
    <text evidence="5">Expressed by the skin glands.</text>
</comment>
<comment type="similarity">
    <text evidence="2">Belongs to the frog skin active peptide (FSAP) family. Brevinin subfamily.</text>
</comment>
<feature type="signal peptide" evidence="2">
    <location>
        <begin position="1"/>
        <end position="22"/>
    </location>
</feature>
<feature type="propeptide" id="PRO_0000439730" description="Removed in mature form" evidence="5">
    <location>
        <begin position="23"/>
        <end position="45"/>
    </location>
</feature>
<feature type="peptide" id="PRO_0000439731" description="Brevinin-1CG4" evidence="4">
    <location>
        <begin position="48"/>
        <end position="71"/>
    </location>
</feature>
<feature type="disulfide bond" evidence="1">
    <location>
        <begin position="65"/>
        <end position="71"/>
    </location>
</feature>
<organism evidence="4">
    <name type="scientific">Amolops chunganensis</name>
    <name type="common">Chungan torrent frog</name>
    <name type="synonym">Hylorana chunganensis</name>
    <dbReference type="NCBI Taxonomy" id="325556"/>
    <lineage>
        <taxon>Eukaryota</taxon>
        <taxon>Metazoa</taxon>
        <taxon>Chordata</taxon>
        <taxon>Craniata</taxon>
        <taxon>Vertebrata</taxon>
        <taxon>Euteleostomi</taxon>
        <taxon>Amphibia</taxon>
        <taxon>Batrachia</taxon>
        <taxon>Anura</taxon>
        <taxon>Neobatrachia</taxon>
        <taxon>Ranoidea</taxon>
        <taxon>Ranidae</taxon>
        <taxon>Amolops</taxon>
    </lineage>
</organism>
<sequence length="71" mass="8268">MFTLKKSLLLLFFLGTINLSLCEQERNADEEERRDDSDKRDVEVEKRFLSTLLNVASKVVPTLFCKITKKC</sequence>
<evidence type="ECO:0000250" key="1">
    <source>
        <dbReference type="UniProtKB" id="P80398"/>
    </source>
</evidence>
<evidence type="ECO:0000255" key="2"/>
<evidence type="ECO:0000269" key="3">
    <source>
    </source>
</evidence>
<evidence type="ECO:0000303" key="4">
    <source>
    </source>
</evidence>
<evidence type="ECO:0000305" key="5">
    <source>
    </source>
</evidence>
<evidence type="ECO:0000312" key="6">
    <source>
        <dbReference type="EMBL" id="ADM34205.1"/>
    </source>
</evidence>
<keyword id="KW-0878">Amphibian defense peptide</keyword>
<keyword id="KW-0044">Antibiotic</keyword>
<keyword id="KW-0929">Antimicrobial</keyword>
<keyword id="KW-0165">Cleavage on pair of basic residues</keyword>
<keyword id="KW-0204">Cytolysis</keyword>
<keyword id="KW-1015">Disulfide bond</keyword>
<keyword id="KW-0295">Fungicide</keyword>
<keyword id="KW-0354">Hemolysis</keyword>
<keyword id="KW-0964">Secreted</keyword>
<keyword id="KW-0732">Signal</keyword>
<dbReference type="EMBL" id="HQ009829">
    <property type="protein sequence ID" value="ADM34205.1"/>
    <property type="molecule type" value="mRNA"/>
</dbReference>
<dbReference type="GO" id="GO:0005576">
    <property type="term" value="C:extracellular region"/>
    <property type="evidence" value="ECO:0007669"/>
    <property type="project" value="UniProtKB-SubCell"/>
</dbReference>
<dbReference type="GO" id="GO:0042742">
    <property type="term" value="P:defense response to bacterium"/>
    <property type="evidence" value="ECO:0007669"/>
    <property type="project" value="UniProtKB-KW"/>
</dbReference>
<dbReference type="GO" id="GO:0050832">
    <property type="term" value="P:defense response to fungus"/>
    <property type="evidence" value="ECO:0007669"/>
    <property type="project" value="UniProtKB-KW"/>
</dbReference>
<dbReference type="GO" id="GO:0031640">
    <property type="term" value="P:killing of cells of another organism"/>
    <property type="evidence" value="ECO:0007669"/>
    <property type="project" value="UniProtKB-KW"/>
</dbReference>
<dbReference type="InterPro" id="IPR012520">
    <property type="entry name" value="Antimicrobial_frog_1"/>
</dbReference>
<dbReference type="InterPro" id="IPR004275">
    <property type="entry name" value="Frog_antimicrobial_propeptide"/>
</dbReference>
<dbReference type="Pfam" id="PF08018">
    <property type="entry name" value="Antimicrobial_1"/>
    <property type="match status" value="1"/>
</dbReference>
<dbReference type="Pfam" id="PF03032">
    <property type="entry name" value="FSAP_sig_propep"/>
    <property type="match status" value="1"/>
</dbReference>